<feature type="chain" id="PRO_0000202048" description="DNA recombination protein RmuC homolog">
    <location>
        <begin position="1"/>
        <end position="453"/>
    </location>
</feature>
<feature type="coiled-coil region" evidence="2">
    <location>
        <begin position="16"/>
        <end position="201"/>
    </location>
</feature>
<evidence type="ECO:0000250" key="1"/>
<evidence type="ECO:0000255" key="2"/>
<evidence type="ECO:0000305" key="3"/>
<accession>Q9I4U3</accession>
<protein>
    <recommendedName>
        <fullName>DNA recombination protein RmuC homolog</fullName>
    </recommendedName>
</protein>
<gene>
    <name type="primary">rmuC</name>
    <name type="ordered locus">PA1031</name>
</gene>
<reference key="1">
    <citation type="journal article" date="2000" name="Nature">
        <title>Complete genome sequence of Pseudomonas aeruginosa PAO1, an opportunistic pathogen.</title>
        <authorList>
            <person name="Stover C.K."/>
            <person name="Pham X.-Q.T."/>
            <person name="Erwin A.L."/>
            <person name="Mizoguchi S.D."/>
            <person name="Warrener P."/>
            <person name="Hickey M.J."/>
            <person name="Brinkman F.S.L."/>
            <person name="Hufnagle W.O."/>
            <person name="Kowalik D.J."/>
            <person name="Lagrou M."/>
            <person name="Garber R.L."/>
            <person name="Goltry L."/>
            <person name="Tolentino E."/>
            <person name="Westbrock-Wadman S."/>
            <person name="Yuan Y."/>
            <person name="Brody L.L."/>
            <person name="Coulter S.N."/>
            <person name="Folger K.R."/>
            <person name="Kas A."/>
            <person name="Larbig K."/>
            <person name="Lim R.M."/>
            <person name="Smith K.A."/>
            <person name="Spencer D.H."/>
            <person name="Wong G.K.-S."/>
            <person name="Wu Z."/>
            <person name="Paulsen I.T."/>
            <person name="Reizer J."/>
            <person name="Saier M.H. Jr."/>
            <person name="Hancock R.E.W."/>
            <person name="Lory S."/>
            <person name="Olson M.V."/>
        </authorList>
    </citation>
    <scope>NUCLEOTIDE SEQUENCE [LARGE SCALE GENOMIC DNA]</scope>
    <source>
        <strain>ATCC 15692 / DSM 22644 / CIP 104116 / JCM 14847 / LMG 12228 / 1C / PRS 101 / PAO1</strain>
    </source>
</reference>
<dbReference type="EMBL" id="AE004091">
    <property type="protein sequence ID" value="AAG04420.1"/>
    <property type="molecule type" value="Genomic_DNA"/>
</dbReference>
<dbReference type="PIR" id="E83517">
    <property type="entry name" value="E83517"/>
</dbReference>
<dbReference type="RefSeq" id="NP_249722.1">
    <property type="nucleotide sequence ID" value="NC_002516.2"/>
</dbReference>
<dbReference type="RefSeq" id="WP_010895536.1">
    <property type="nucleotide sequence ID" value="NZ_QZGE01000006.1"/>
</dbReference>
<dbReference type="SMR" id="Q9I4U3"/>
<dbReference type="FunCoup" id="Q9I4U3">
    <property type="interactions" value="119"/>
</dbReference>
<dbReference type="STRING" id="208964.PA1031"/>
<dbReference type="PaxDb" id="208964-PA1031"/>
<dbReference type="GeneID" id="880473"/>
<dbReference type="KEGG" id="pae:PA1031"/>
<dbReference type="PATRIC" id="fig|208964.12.peg.1066"/>
<dbReference type="PseudoCAP" id="PA1031"/>
<dbReference type="HOGENOM" id="CLU_024057_0_0_6"/>
<dbReference type="InParanoid" id="Q9I4U3"/>
<dbReference type="OrthoDB" id="9765111at2"/>
<dbReference type="PhylomeDB" id="Q9I4U3"/>
<dbReference type="BioCyc" id="PAER208964:G1FZ6-1053-MONOMER"/>
<dbReference type="Proteomes" id="UP000002438">
    <property type="component" value="Chromosome"/>
</dbReference>
<dbReference type="GO" id="GO:0006310">
    <property type="term" value="P:DNA recombination"/>
    <property type="evidence" value="ECO:0000318"/>
    <property type="project" value="GO_Central"/>
</dbReference>
<dbReference type="InterPro" id="IPR003798">
    <property type="entry name" value="DNA_recombination_RmuC"/>
</dbReference>
<dbReference type="PANTHER" id="PTHR30563">
    <property type="entry name" value="DNA RECOMBINATION PROTEIN RMUC"/>
    <property type="match status" value="1"/>
</dbReference>
<dbReference type="PANTHER" id="PTHR30563:SF0">
    <property type="entry name" value="DNA RECOMBINATION PROTEIN RMUC"/>
    <property type="match status" value="1"/>
</dbReference>
<dbReference type="Pfam" id="PF02646">
    <property type="entry name" value="RmuC"/>
    <property type="match status" value="1"/>
</dbReference>
<proteinExistence type="inferred from homology"/>
<sequence>MLGERLATAQLAQDGLNAQLETSREAYQQLGERHARFAGEVAALRREAELMGEERQRASQAEARWASERQGREEELRRLASERAALAAELREQQESHQQRLTDLQSARDELRAQFAELAGKIFDEREQRFAETSQQRLGQMLDPLKERIQAFEKRVEESYQQEARERFSLSKELERLQQLNLRLGEEATNLTRALKGQKTQGNWGELVLERVLEHAGLEKGREYETQVSLKGAEGERFQPDVLIRLPGDKQVVVDAKVSLTAYQQYIAADDDLLRQQALKQHVTSLRNHVKGLSGKDYRRLEGLHSLDFVLLFMPIEAAFSTALQAEPNLFQDAFAQNIVIVSPTTLLATLRVIDSLWRQERQNQNAREIAERAGSLYDKFVLFVQDLDEVGSRLQQLDKAYAAARNKLTEGRGNLISRSEQLKLLGARASKSLPTDWLDRALVAPVEEAGEE</sequence>
<keyword id="KW-0175">Coiled coil</keyword>
<keyword id="KW-0233">DNA recombination</keyword>
<keyword id="KW-1185">Reference proteome</keyword>
<organism>
    <name type="scientific">Pseudomonas aeruginosa (strain ATCC 15692 / DSM 22644 / CIP 104116 / JCM 14847 / LMG 12228 / 1C / PRS 101 / PAO1)</name>
    <dbReference type="NCBI Taxonomy" id="208964"/>
    <lineage>
        <taxon>Bacteria</taxon>
        <taxon>Pseudomonadati</taxon>
        <taxon>Pseudomonadota</taxon>
        <taxon>Gammaproteobacteria</taxon>
        <taxon>Pseudomonadales</taxon>
        <taxon>Pseudomonadaceae</taxon>
        <taxon>Pseudomonas</taxon>
    </lineage>
</organism>
<name>RMUC_PSEAE</name>
<comment type="function">
    <text evidence="1">Involved in DNA recombination.</text>
</comment>
<comment type="similarity">
    <text evidence="3">Belongs to the RmuC family.</text>
</comment>